<feature type="initiator methionine" description="Removed" evidence="1">
    <location>
        <position position="1"/>
    </location>
</feature>
<feature type="chain" id="PRO_0000239132" description="CDP-diacylglycerol--glycerol-3-phosphate 3-phosphatidyltransferase">
    <location>
        <begin position="2"/>
        <end position="182"/>
    </location>
</feature>
<feature type="topological domain" description="Cytoplasmic" evidence="2">
    <location>
        <begin position="2"/>
        <end position="12"/>
    </location>
</feature>
<feature type="transmembrane region" description="Helical" evidence="2">
    <location>
        <begin position="13"/>
        <end position="37"/>
    </location>
</feature>
<feature type="topological domain" description="Periplasmic" evidence="2">
    <location>
        <begin position="38"/>
        <end position="60"/>
    </location>
</feature>
<feature type="transmembrane region" description="Helical" evidence="2">
    <location>
        <begin position="61"/>
        <end position="81"/>
    </location>
</feature>
<feature type="topological domain" description="Cytoplasmic" evidence="2">
    <location>
        <begin position="82"/>
        <end position="86"/>
    </location>
</feature>
<feature type="transmembrane region" description="Helical" evidence="2">
    <location>
        <begin position="87"/>
        <end position="107"/>
    </location>
</feature>
<feature type="topological domain" description="Periplasmic" evidence="2">
    <location>
        <begin position="108"/>
        <end position="145"/>
    </location>
</feature>
<feature type="transmembrane region" description="Helical" evidence="2">
    <location>
        <begin position="146"/>
        <end position="168"/>
    </location>
</feature>
<feature type="topological domain" description="Cytoplasmic" evidence="2">
    <location>
        <begin position="169"/>
        <end position="181"/>
    </location>
</feature>
<comment type="function">
    <text evidence="2">Catalyzes the conversion of cytidine diphosphate diacylglycerol (CDP-DG) and glycerol 3-phosphate into phosphatidylglycerol. Essential for the synthesis of anionic phospholipids, thereby playing a role in balancing the ratio of zwitterionic and anionic phospholipids, which is thought to be important for normal membrane function.</text>
</comment>
<comment type="catalytic activity">
    <reaction evidence="2">
        <text>a CDP-1,2-diacyl-sn-glycerol + sn-glycerol 3-phosphate = a 1,2-diacyl-sn-glycero-3-phospho-(1'-sn-glycero-3'-phosphate) + CMP + H(+)</text>
        <dbReference type="Rhea" id="RHEA:12593"/>
        <dbReference type="ChEBI" id="CHEBI:15378"/>
        <dbReference type="ChEBI" id="CHEBI:57597"/>
        <dbReference type="ChEBI" id="CHEBI:58332"/>
        <dbReference type="ChEBI" id="CHEBI:60110"/>
        <dbReference type="ChEBI" id="CHEBI:60377"/>
        <dbReference type="EC" id="2.7.8.5"/>
    </reaction>
</comment>
<comment type="pathway">
    <text evidence="2">Phospholipid metabolism; phosphatidylglycerol biosynthesis; phosphatidylglycerol from CDP-diacylglycerol: step 1/2.</text>
</comment>
<comment type="subcellular location">
    <subcellularLocation>
        <location evidence="2">Cell inner membrane</location>
        <topology evidence="2">Multi-pass membrane protein</topology>
    </subcellularLocation>
</comment>
<comment type="similarity">
    <text evidence="2">Belongs to the CDP-alcohol phosphatidyltransferase class-I family.</text>
</comment>
<name>PGSA_SHISS</name>
<protein>
    <recommendedName>
        <fullName evidence="2">CDP-diacylglycerol--glycerol-3-phosphate 3-phosphatidyltransferase</fullName>
        <ecNumber evidence="2">2.7.8.5</ecNumber>
    </recommendedName>
    <alternativeName>
        <fullName evidence="2">Phosphatidylglycerophosphate synthase</fullName>
        <shortName evidence="2">PGP synthase</shortName>
    </alternativeName>
</protein>
<dbReference type="EC" id="2.7.8.5" evidence="2"/>
<dbReference type="EMBL" id="CP000038">
    <property type="protein sequence ID" value="AAZ87926.1"/>
    <property type="molecule type" value="Genomic_DNA"/>
</dbReference>
<dbReference type="RefSeq" id="WP_001160187.1">
    <property type="nucleotide sequence ID" value="NC_007384.1"/>
</dbReference>
<dbReference type="SMR" id="Q3Z2T6"/>
<dbReference type="GeneID" id="93776217"/>
<dbReference type="KEGG" id="ssn:SSON_1206"/>
<dbReference type="HOGENOM" id="CLU_051314_2_1_6"/>
<dbReference type="UniPathway" id="UPA00084">
    <property type="reaction ID" value="UER00503"/>
</dbReference>
<dbReference type="Proteomes" id="UP000002529">
    <property type="component" value="Chromosome"/>
</dbReference>
<dbReference type="GO" id="GO:0005886">
    <property type="term" value="C:plasma membrane"/>
    <property type="evidence" value="ECO:0007669"/>
    <property type="project" value="UniProtKB-SubCell"/>
</dbReference>
<dbReference type="GO" id="GO:0008444">
    <property type="term" value="F:CDP-diacylglycerol-glycerol-3-phosphate 3-phosphatidyltransferase activity"/>
    <property type="evidence" value="ECO:0007669"/>
    <property type="project" value="UniProtKB-UniRule"/>
</dbReference>
<dbReference type="GO" id="GO:0006655">
    <property type="term" value="P:phosphatidylglycerol biosynthetic process"/>
    <property type="evidence" value="ECO:0007669"/>
    <property type="project" value="UniProtKB-UniRule"/>
</dbReference>
<dbReference type="FunFam" id="1.20.120.1760:FF:000001">
    <property type="entry name" value="CDP-diacylglycerol--glycerol-3-phosphate 3-phosphatidyltransferase"/>
    <property type="match status" value="1"/>
</dbReference>
<dbReference type="Gene3D" id="1.20.120.1760">
    <property type="match status" value="1"/>
</dbReference>
<dbReference type="HAMAP" id="MF_01437">
    <property type="entry name" value="PgsA"/>
    <property type="match status" value="1"/>
</dbReference>
<dbReference type="InterPro" id="IPR050324">
    <property type="entry name" value="CDP-alcohol_PTase-I"/>
</dbReference>
<dbReference type="InterPro" id="IPR000462">
    <property type="entry name" value="CDP-OH_P_trans"/>
</dbReference>
<dbReference type="InterPro" id="IPR043130">
    <property type="entry name" value="CDP-OH_PTrfase_TM_dom"/>
</dbReference>
<dbReference type="InterPro" id="IPR048254">
    <property type="entry name" value="CDP_ALCOHOL_P_TRANSF_CS"/>
</dbReference>
<dbReference type="InterPro" id="IPR023762">
    <property type="entry name" value="PGP_synthase_bac"/>
</dbReference>
<dbReference type="InterPro" id="IPR004570">
    <property type="entry name" value="Phosphatidylglycerol_P_synth"/>
</dbReference>
<dbReference type="NCBIfam" id="TIGR00560">
    <property type="entry name" value="pgsA"/>
    <property type="match status" value="1"/>
</dbReference>
<dbReference type="NCBIfam" id="NF008090">
    <property type="entry name" value="PRK10832.1"/>
    <property type="match status" value="1"/>
</dbReference>
<dbReference type="PANTHER" id="PTHR14269:SF62">
    <property type="entry name" value="CDP-DIACYLGLYCEROL--GLYCEROL-3-PHOSPHATE 3-PHOSPHATIDYLTRANSFERASE 1, CHLOROPLASTIC"/>
    <property type="match status" value="1"/>
</dbReference>
<dbReference type="PANTHER" id="PTHR14269">
    <property type="entry name" value="CDP-DIACYLGLYCEROL--GLYCEROL-3-PHOSPHATE 3-PHOSPHATIDYLTRANSFERASE-RELATED"/>
    <property type="match status" value="1"/>
</dbReference>
<dbReference type="Pfam" id="PF01066">
    <property type="entry name" value="CDP-OH_P_transf"/>
    <property type="match status" value="1"/>
</dbReference>
<dbReference type="PIRSF" id="PIRSF000847">
    <property type="entry name" value="Phos_ph_gly_syn"/>
    <property type="match status" value="1"/>
</dbReference>
<dbReference type="PROSITE" id="PS00379">
    <property type="entry name" value="CDP_ALCOHOL_P_TRANSF"/>
    <property type="match status" value="1"/>
</dbReference>
<evidence type="ECO:0000250" key="1"/>
<evidence type="ECO:0000255" key="2">
    <source>
        <dbReference type="HAMAP-Rule" id="MF_01437"/>
    </source>
</evidence>
<sequence>MQFNIPTLLTLFRVILIPFFVLVFYLPVTWSPFAAALIFCVAAVTDWFDGFLARRWNQSTRFGAFLDPVADKVLVAIAMVLVTEHYHSWWVTLPAATMIAREIIISALREWMAELGKRSSVAVSWIGKVKTTAQMVALAWLLWRPNIWVEYAGIALFFVAAVLTLWSMLQYLSAARADLLDQ</sequence>
<keyword id="KW-0997">Cell inner membrane</keyword>
<keyword id="KW-1003">Cell membrane</keyword>
<keyword id="KW-0444">Lipid biosynthesis</keyword>
<keyword id="KW-0443">Lipid metabolism</keyword>
<keyword id="KW-0472">Membrane</keyword>
<keyword id="KW-0594">Phospholipid biosynthesis</keyword>
<keyword id="KW-1208">Phospholipid metabolism</keyword>
<keyword id="KW-1185">Reference proteome</keyword>
<keyword id="KW-0808">Transferase</keyword>
<keyword id="KW-0812">Transmembrane</keyword>
<keyword id="KW-1133">Transmembrane helix</keyword>
<reference key="1">
    <citation type="journal article" date="2005" name="Nucleic Acids Res.">
        <title>Genome dynamics and diversity of Shigella species, the etiologic agents of bacillary dysentery.</title>
        <authorList>
            <person name="Yang F."/>
            <person name="Yang J."/>
            <person name="Zhang X."/>
            <person name="Chen L."/>
            <person name="Jiang Y."/>
            <person name="Yan Y."/>
            <person name="Tang X."/>
            <person name="Wang J."/>
            <person name="Xiong Z."/>
            <person name="Dong J."/>
            <person name="Xue Y."/>
            <person name="Zhu Y."/>
            <person name="Xu X."/>
            <person name="Sun L."/>
            <person name="Chen S."/>
            <person name="Nie H."/>
            <person name="Peng J."/>
            <person name="Xu J."/>
            <person name="Wang Y."/>
            <person name="Yuan Z."/>
            <person name="Wen Y."/>
            <person name="Yao Z."/>
            <person name="Shen Y."/>
            <person name="Qiang B."/>
            <person name="Hou Y."/>
            <person name="Yu J."/>
            <person name="Jin Q."/>
        </authorList>
    </citation>
    <scope>NUCLEOTIDE SEQUENCE [LARGE SCALE GENOMIC DNA]</scope>
    <source>
        <strain>Ss046</strain>
    </source>
</reference>
<organism>
    <name type="scientific">Shigella sonnei (strain Ss046)</name>
    <dbReference type="NCBI Taxonomy" id="300269"/>
    <lineage>
        <taxon>Bacteria</taxon>
        <taxon>Pseudomonadati</taxon>
        <taxon>Pseudomonadota</taxon>
        <taxon>Gammaproteobacteria</taxon>
        <taxon>Enterobacterales</taxon>
        <taxon>Enterobacteriaceae</taxon>
        <taxon>Shigella</taxon>
    </lineage>
</organism>
<accession>Q3Z2T6</accession>
<proteinExistence type="inferred from homology"/>
<gene>
    <name evidence="2" type="primary">pgsA</name>
    <name type="ordered locus">SSON_1206</name>
</gene>